<comment type="function">
    <text>Inhibins and activins inhibit and activate, respectively, the secretion of follitropin by the pituitary gland. Inhibins/activins are involved in regulating a number of diverse functions such as hypothalamic and pituitary hormone secretion, gonadal hormone secretion, germ cell development and maturation, erythroid differentiation, insulin secretion, nerve cell survival, embryonic axial development or bone growth, depending on their subunit composition. Inhibins appear to oppose the functions of activins.</text>
</comment>
<comment type="subunit">
    <text>Dimeric, linked by one or more disulfide bonds. Inhibin A is a dimer of alpha and beta-A. Inhibin B is a dimer of alpha and beta-B. Activin A is a homodimer of beta-A. Activin B is a homodimer of beta-B. Activin AB is a dimer of beta-A and beta-B.</text>
</comment>
<comment type="subcellular location">
    <subcellularLocation>
        <location evidence="1">Secreted</location>
    </subcellularLocation>
</comment>
<comment type="similarity">
    <text evidence="4">Belongs to the TGF-beta family.</text>
</comment>
<organism>
    <name type="scientific">Gallus gallus</name>
    <name type="common">Chicken</name>
    <dbReference type="NCBI Taxonomy" id="9031"/>
    <lineage>
        <taxon>Eukaryota</taxon>
        <taxon>Metazoa</taxon>
        <taxon>Chordata</taxon>
        <taxon>Craniata</taxon>
        <taxon>Vertebrata</taxon>
        <taxon>Euteleostomi</taxon>
        <taxon>Archelosauria</taxon>
        <taxon>Archosauria</taxon>
        <taxon>Dinosauria</taxon>
        <taxon>Saurischia</taxon>
        <taxon>Theropoda</taxon>
        <taxon>Coelurosauria</taxon>
        <taxon>Aves</taxon>
        <taxon>Neognathae</taxon>
        <taxon>Galloanserae</taxon>
        <taxon>Galliformes</taxon>
        <taxon>Phasianidae</taxon>
        <taxon>Phasianinae</taxon>
        <taxon>Gallus</taxon>
    </lineage>
</organism>
<name>INHBB_CHICK</name>
<dbReference type="EMBL" id="Z71594">
    <property type="protein sequence ID" value="CAA96248.1"/>
    <property type="molecule type" value="mRNA"/>
</dbReference>
<dbReference type="EMBL" id="AF055478">
    <property type="protein sequence ID" value="AAC14187.1"/>
    <property type="molecule type" value="mRNA"/>
</dbReference>
<dbReference type="EMBL" id="M61166">
    <property type="protein sequence ID" value="AAA48568.1"/>
    <property type="molecule type" value="mRNA"/>
</dbReference>
<dbReference type="EMBL" id="M57408">
    <property type="protein sequence ID" value="AAA03079.1"/>
    <property type="molecule type" value="mRNA"/>
</dbReference>
<dbReference type="PIR" id="A36193">
    <property type="entry name" value="A36193"/>
</dbReference>
<dbReference type="RefSeq" id="NP_990537.1">
    <property type="nucleotide sequence ID" value="NM_205206.1"/>
</dbReference>
<dbReference type="SMR" id="P27093"/>
<dbReference type="FunCoup" id="P27093">
    <property type="interactions" value="47"/>
</dbReference>
<dbReference type="STRING" id="9031.ENSGALP00000042014"/>
<dbReference type="GlyCosmos" id="P27093">
    <property type="glycosylation" value="1 site, No reported glycans"/>
</dbReference>
<dbReference type="GlyGen" id="P27093">
    <property type="glycosylation" value="2 sites"/>
</dbReference>
<dbReference type="PaxDb" id="9031-ENSGALP00000042014"/>
<dbReference type="GeneID" id="396126"/>
<dbReference type="KEGG" id="gga:396126"/>
<dbReference type="CTD" id="3625"/>
<dbReference type="VEuPathDB" id="HostDB:geneid_396126"/>
<dbReference type="eggNOG" id="KOG3900">
    <property type="taxonomic scope" value="Eukaryota"/>
</dbReference>
<dbReference type="HOGENOM" id="CLU_020515_5_1_1"/>
<dbReference type="InParanoid" id="P27093"/>
<dbReference type="OrthoDB" id="6516235at2759"/>
<dbReference type="PhylomeDB" id="P27093"/>
<dbReference type="PRO" id="PR:P27093"/>
<dbReference type="Proteomes" id="UP000000539">
    <property type="component" value="Unassembled WGS sequence"/>
</dbReference>
<dbReference type="GO" id="GO:0005615">
    <property type="term" value="C:extracellular space"/>
    <property type="evidence" value="ECO:0000318"/>
    <property type="project" value="GO_Central"/>
</dbReference>
<dbReference type="GO" id="GO:0048471">
    <property type="term" value="C:perinuclear region of cytoplasm"/>
    <property type="evidence" value="ECO:0000250"/>
    <property type="project" value="UniProtKB"/>
</dbReference>
<dbReference type="GO" id="GO:0005125">
    <property type="term" value="F:cytokine activity"/>
    <property type="evidence" value="ECO:0000318"/>
    <property type="project" value="GO_Central"/>
</dbReference>
<dbReference type="GO" id="GO:0008083">
    <property type="term" value="F:growth factor activity"/>
    <property type="evidence" value="ECO:0007669"/>
    <property type="project" value="UniProtKB-KW"/>
</dbReference>
<dbReference type="GO" id="GO:0005179">
    <property type="term" value="F:hormone activity"/>
    <property type="evidence" value="ECO:0007669"/>
    <property type="project" value="UniProtKB-KW"/>
</dbReference>
<dbReference type="GO" id="GO:0042803">
    <property type="term" value="F:protein homodimerization activity"/>
    <property type="evidence" value="ECO:0000250"/>
    <property type="project" value="UniProtKB"/>
</dbReference>
<dbReference type="GO" id="GO:0032924">
    <property type="term" value="P:activin receptor signaling pathway"/>
    <property type="evidence" value="ECO:0000250"/>
    <property type="project" value="UniProtKB"/>
</dbReference>
<dbReference type="GO" id="GO:0048513">
    <property type="term" value="P:animal organ development"/>
    <property type="evidence" value="ECO:0007669"/>
    <property type="project" value="UniProtKB-ARBA"/>
</dbReference>
<dbReference type="GO" id="GO:0032869">
    <property type="term" value="P:cellular response to insulin stimulus"/>
    <property type="evidence" value="ECO:0000250"/>
    <property type="project" value="UniProtKB"/>
</dbReference>
<dbReference type="GO" id="GO:0009267">
    <property type="term" value="P:cellular response to starvation"/>
    <property type="evidence" value="ECO:0000250"/>
    <property type="project" value="UniProtKB"/>
</dbReference>
<dbReference type="GO" id="GO:0045444">
    <property type="term" value="P:fat cell differentiation"/>
    <property type="evidence" value="ECO:0000250"/>
    <property type="project" value="UniProtKB"/>
</dbReference>
<dbReference type="GO" id="GO:0046882">
    <property type="term" value="P:negative regulation of follicle-stimulating hormone secretion"/>
    <property type="evidence" value="ECO:0000250"/>
    <property type="project" value="UniProtKB"/>
</dbReference>
<dbReference type="GO" id="GO:0032686">
    <property type="term" value="P:negative regulation of hepatocyte growth factor production"/>
    <property type="evidence" value="ECO:0000250"/>
    <property type="project" value="UniProtKB"/>
</dbReference>
<dbReference type="GO" id="GO:0046676">
    <property type="term" value="P:negative regulation of insulin secretion"/>
    <property type="evidence" value="ECO:0000250"/>
    <property type="project" value="UniProtKB"/>
</dbReference>
<dbReference type="GO" id="GO:0046881">
    <property type="term" value="P:positive regulation of follicle-stimulating hormone secretion"/>
    <property type="evidence" value="ECO:0000250"/>
    <property type="project" value="UniProtKB"/>
</dbReference>
<dbReference type="GO" id="GO:0060279">
    <property type="term" value="P:positive regulation of ovulation"/>
    <property type="evidence" value="ECO:0000250"/>
    <property type="project" value="UniProtKB"/>
</dbReference>
<dbReference type="GO" id="GO:0009611">
    <property type="term" value="P:response to wounding"/>
    <property type="evidence" value="ECO:0000250"/>
    <property type="project" value="UniProtKB"/>
</dbReference>
<dbReference type="CDD" id="cd19405">
    <property type="entry name" value="TGF_beta_INHBB"/>
    <property type="match status" value="1"/>
</dbReference>
<dbReference type="FunFam" id="2.10.90.10:FF:000005">
    <property type="entry name" value="Inhibin beta A chain"/>
    <property type="match status" value="1"/>
</dbReference>
<dbReference type="FunFam" id="2.60.120.970:FF:000012">
    <property type="entry name" value="inhibin beta B chain"/>
    <property type="match status" value="1"/>
</dbReference>
<dbReference type="Gene3D" id="2.60.120.970">
    <property type="match status" value="1"/>
</dbReference>
<dbReference type="Gene3D" id="2.10.90.10">
    <property type="entry name" value="Cystine-knot cytokines"/>
    <property type="match status" value="1"/>
</dbReference>
<dbReference type="InterPro" id="IPR029034">
    <property type="entry name" value="Cystine-knot_cytokine"/>
</dbReference>
<dbReference type="InterPro" id="IPR000381">
    <property type="entry name" value="INHBB_C"/>
</dbReference>
<dbReference type="InterPro" id="IPR001839">
    <property type="entry name" value="TGF-b_C"/>
</dbReference>
<dbReference type="InterPro" id="IPR001111">
    <property type="entry name" value="TGF-b_propeptide"/>
</dbReference>
<dbReference type="InterPro" id="IPR015615">
    <property type="entry name" value="TGF-beta-rel"/>
</dbReference>
<dbReference type="InterPro" id="IPR017948">
    <property type="entry name" value="TGFb_CS"/>
</dbReference>
<dbReference type="PANTHER" id="PTHR11848:SF29">
    <property type="entry name" value="INHIBIN BETA B CHAIN"/>
    <property type="match status" value="1"/>
</dbReference>
<dbReference type="PANTHER" id="PTHR11848">
    <property type="entry name" value="TGF-BETA FAMILY"/>
    <property type="match status" value="1"/>
</dbReference>
<dbReference type="Pfam" id="PF00019">
    <property type="entry name" value="TGF_beta"/>
    <property type="match status" value="1"/>
</dbReference>
<dbReference type="Pfam" id="PF00688">
    <property type="entry name" value="TGFb_propeptide"/>
    <property type="match status" value="1"/>
</dbReference>
<dbReference type="PRINTS" id="PR00671">
    <property type="entry name" value="INHIBINBB"/>
</dbReference>
<dbReference type="SMART" id="SM00204">
    <property type="entry name" value="TGFB"/>
    <property type="match status" value="1"/>
</dbReference>
<dbReference type="SUPFAM" id="SSF57501">
    <property type="entry name" value="Cystine-knot cytokines"/>
    <property type="match status" value="1"/>
</dbReference>
<dbReference type="PROSITE" id="PS00250">
    <property type="entry name" value="TGF_BETA_1"/>
    <property type="match status" value="1"/>
</dbReference>
<dbReference type="PROSITE" id="PS51362">
    <property type="entry name" value="TGF_BETA_2"/>
    <property type="match status" value="1"/>
</dbReference>
<protein>
    <recommendedName>
        <fullName>Inhibin beta B chain</fullName>
    </recommendedName>
    <alternativeName>
        <fullName>Activin beta-B chain</fullName>
    </alternativeName>
</protein>
<feature type="signal peptide" evidence="2">
    <location>
        <begin position="1"/>
        <end position="25"/>
    </location>
</feature>
<feature type="propeptide" id="PRO_0000033720" evidence="2">
    <location>
        <begin position="26"/>
        <end position="276"/>
    </location>
</feature>
<feature type="chain" id="PRO_0000033721" description="Inhibin beta B chain">
    <location>
        <begin position="277"/>
        <end position="391"/>
    </location>
</feature>
<feature type="region of interest" description="Disordered" evidence="3">
    <location>
        <begin position="27"/>
        <end position="47"/>
    </location>
</feature>
<feature type="glycosylation site" description="N-linked (GlcNAc...) asparagine" evidence="2">
    <location>
        <position position="77"/>
    </location>
</feature>
<feature type="disulfide bond" evidence="1">
    <location>
        <begin position="280"/>
        <end position="288"/>
    </location>
</feature>
<feature type="disulfide bond" evidence="1">
    <location>
        <begin position="287"/>
        <end position="356"/>
    </location>
</feature>
<feature type="disulfide bond" evidence="1">
    <location>
        <begin position="316"/>
        <end position="388"/>
    </location>
</feature>
<feature type="disulfide bond" evidence="1">
    <location>
        <begin position="320"/>
        <end position="390"/>
    </location>
</feature>
<feature type="disulfide bond" description="Interchain" evidence="1">
    <location>
        <position position="355"/>
    </location>
</feature>
<feature type="sequence conflict" description="In Ref. 2; AAC14187." evidence="4" ref="2">
    <original>P</original>
    <variation>PG</variation>
    <location>
        <position position="30"/>
    </location>
</feature>
<sequence>MDGAARRGVLAALLACGLLLLGAAATPTPPPAGSSPQDTCTSCGFRRPEEPGKVDGDFLEAVKRHILSRLQMRDRPNITHAVPKAAMVTALRKLHAGKVREDGRVEIPSLDGQASAGPPAHDPVSEIISFAETDDLASSRVRLYFFISNEGNQNLFVVQASLWLYLKLLPYVLEKGSRRKVRVKVYFQDPDTSNKWNVVEKKVDLKRSGWHTFPMTEAIQALFERGERRLNLDVQCEGCEEYSVLPIYVDPGEESHRPFLVVQARLADNKHRIRKRGLECDGRTNLCCRQQFYIDFRLIGWNDWIIAPSGYYGNYCEGSCPAYLAGVPGSASSFHTAVVNQYRMRGLNPGTVNSCCIPTKLSTMSMLYFDDEYNIVKRDVPNMIVEECGCA</sequence>
<gene>
    <name type="primary">INHBB</name>
</gene>
<reference key="1">
    <citation type="submission" date="1996-07" db="EMBL/GenBank/DDBJ databases">
        <authorList>
            <person name="Klinger H."/>
            <person name="Halaschek-Wiener J."/>
            <person name="Wohlrab B.K."/>
            <person name="Kuchler K."/>
            <person name="Wohlrab F."/>
        </authorList>
    </citation>
    <scope>NUCLEOTIDE SEQUENCE [MRNA]</scope>
    <source>
        <tissue>Follicular cell</tissue>
    </source>
</reference>
<reference key="2">
    <citation type="submission" date="1998-03" db="EMBL/GenBank/DDBJ databases">
        <authorList>
            <person name="Hecht D.J."/>
            <person name="Davis A.J."/>
            <person name="Ryan I.M."/>
            <person name="Johnson P.A."/>
        </authorList>
    </citation>
    <scope>NUCLEOTIDE SEQUENCE [MRNA]</scope>
    <source>
        <strain>White leghorn</strain>
        <tissue>Ovary</tissue>
    </source>
</reference>
<reference key="3">
    <citation type="journal article" date="1990" name="Cell">
        <title>Activin can induce the formation of axial structures and is expressed in the hypoblast of the chick.</title>
        <authorList>
            <person name="Mitrani E."/>
            <person name="Ziv T."/>
            <person name="Thomsen G."/>
            <person name="Shimoni Y."/>
            <person name="Melton D.A."/>
            <person name="Bril A."/>
        </authorList>
    </citation>
    <scope>NUCLEOTIDE SEQUENCE [MRNA] OF 311-381</scope>
</reference>
<keyword id="KW-0165">Cleavage on pair of basic residues</keyword>
<keyword id="KW-1015">Disulfide bond</keyword>
<keyword id="KW-0325">Glycoprotein</keyword>
<keyword id="KW-0339">Growth factor</keyword>
<keyword id="KW-0372">Hormone</keyword>
<keyword id="KW-1185">Reference proteome</keyword>
<keyword id="KW-0964">Secreted</keyword>
<keyword id="KW-0732">Signal</keyword>
<proteinExistence type="evidence at transcript level"/>
<evidence type="ECO:0000250" key="1"/>
<evidence type="ECO:0000255" key="2"/>
<evidence type="ECO:0000256" key="3">
    <source>
        <dbReference type="SAM" id="MobiDB-lite"/>
    </source>
</evidence>
<evidence type="ECO:0000305" key="4"/>
<accession>P27093</accession>
<accession>O73796</accession>